<protein>
    <recommendedName>
        <fullName>22.3 kDa class VI heat shock protein</fullName>
    </recommendedName>
    <alternativeName>
        <fullName>22.3 kDa heat shock protein</fullName>
        <shortName>OsHsp22.3</shortName>
    </alternativeName>
</protein>
<feature type="chain" id="PRO_0000387471" description="22.3 kDa class VI heat shock protein">
    <location>
        <begin position="1"/>
        <end position="203"/>
    </location>
</feature>
<feature type="domain" description="sHSP" evidence="1">
    <location>
        <begin position="86"/>
        <end position="203"/>
    </location>
</feature>
<organism>
    <name type="scientific">Oryza sativa subsp. japonica</name>
    <name type="common">Rice</name>
    <dbReference type="NCBI Taxonomy" id="39947"/>
    <lineage>
        <taxon>Eukaryota</taxon>
        <taxon>Viridiplantae</taxon>
        <taxon>Streptophyta</taxon>
        <taxon>Embryophyta</taxon>
        <taxon>Tracheophyta</taxon>
        <taxon>Spermatophyta</taxon>
        <taxon>Magnoliopsida</taxon>
        <taxon>Liliopsida</taxon>
        <taxon>Poales</taxon>
        <taxon>Poaceae</taxon>
        <taxon>BOP clade</taxon>
        <taxon>Oryzoideae</taxon>
        <taxon>Oryzeae</taxon>
        <taxon>Oryzinae</taxon>
        <taxon>Oryza</taxon>
        <taxon>Oryza sativa</taxon>
    </lineage>
</organism>
<evidence type="ECO:0000255" key="1">
    <source>
        <dbReference type="PROSITE-ProRule" id="PRU00285"/>
    </source>
</evidence>
<evidence type="ECO:0000305" key="2"/>
<dbReference type="EMBL" id="AC113332">
    <property type="protein sequence ID" value="AAT93865.1"/>
    <property type="molecule type" value="Genomic_DNA"/>
</dbReference>
<dbReference type="EMBL" id="AP008211">
    <property type="protein sequence ID" value="BAF17878.1"/>
    <property type="molecule type" value="Genomic_DNA"/>
</dbReference>
<dbReference type="EMBL" id="AP014961">
    <property type="protein sequence ID" value="BAS94758.1"/>
    <property type="molecule type" value="Genomic_DNA"/>
</dbReference>
<dbReference type="EMBL" id="CM000142">
    <property type="protein sequence ID" value="EEE64258.1"/>
    <property type="molecule type" value="Genomic_DNA"/>
</dbReference>
<dbReference type="EMBL" id="AK110627">
    <property type="protein sequence ID" value="BAG99000.1"/>
    <property type="molecule type" value="mRNA"/>
</dbReference>
<dbReference type="RefSeq" id="XP_015638251.1">
    <property type="nucleotide sequence ID" value="XM_015782765.1"/>
</dbReference>
<dbReference type="SMR" id="Q6AUW3"/>
<dbReference type="FunCoup" id="Q6AUW3">
    <property type="interactions" value="1142"/>
</dbReference>
<dbReference type="STRING" id="39947.Q6AUW3"/>
<dbReference type="PaxDb" id="39947-Q6AUW3"/>
<dbReference type="EnsemblPlants" id="Os05t0500500-01">
    <property type="protein sequence ID" value="Os05t0500500-01"/>
    <property type="gene ID" value="Os05g0500500"/>
</dbReference>
<dbReference type="Gramene" id="Os05t0500500-01">
    <property type="protein sequence ID" value="Os05t0500500-01"/>
    <property type="gene ID" value="Os05g0500500"/>
</dbReference>
<dbReference type="KEGG" id="dosa:Os05g0500500"/>
<dbReference type="eggNOG" id="ENOG502RXVI">
    <property type="taxonomic scope" value="Eukaryota"/>
</dbReference>
<dbReference type="HOGENOM" id="CLU_088060_0_0_1"/>
<dbReference type="InParanoid" id="Q6AUW3"/>
<dbReference type="OMA" id="HNDIYLE"/>
<dbReference type="OrthoDB" id="1431247at2759"/>
<dbReference type="Proteomes" id="UP000000763">
    <property type="component" value="Chromosome 5"/>
</dbReference>
<dbReference type="Proteomes" id="UP000007752">
    <property type="component" value="Chromosome 5"/>
</dbReference>
<dbReference type="Proteomes" id="UP000059680">
    <property type="component" value="Chromosome 5"/>
</dbReference>
<dbReference type="GO" id="GO:0005737">
    <property type="term" value="C:cytoplasm"/>
    <property type="evidence" value="ECO:0007669"/>
    <property type="project" value="UniProtKB-SubCell"/>
</dbReference>
<dbReference type="GO" id="GO:0009408">
    <property type="term" value="P:response to heat"/>
    <property type="evidence" value="ECO:0007669"/>
    <property type="project" value="UniProtKB-ARBA"/>
</dbReference>
<dbReference type="CDD" id="cd06472">
    <property type="entry name" value="ACD_ScHsp26_like"/>
    <property type="match status" value="1"/>
</dbReference>
<dbReference type="Gene3D" id="2.60.40.790">
    <property type="match status" value="1"/>
</dbReference>
<dbReference type="InterPro" id="IPR002068">
    <property type="entry name" value="A-crystallin/Hsp20_dom"/>
</dbReference>
<dbReference type="InterPro" id="IPR008978">
    <property type="entry name" value="HSP20-like_chaperone"/>
</dbReference>
<dbReference type="PANTHER" id="PTHR47838">
    <property type="entry name" value="21.7 KDA CLASS VI HEAT SHOCK PROTEIN"/>
    <property type="match status" value="1"/>
</dbReference>
<dbReference type="PANTHER" id="PTHR47838:SF1">
    <property type="entry name" value="21.7 KDA CLASS VI HEAT SHOCK PROTEIN"/>
    <property type="match status" value="1"/>
</dbReference>
<dbReference type="Pfam" id="PF00011">
    <property type="entry name" value="HSP20"/>
    <property type="match status" value="1"/>
</dbReference>
<dbReference type="SUPFAM" id="SSF49764">
    <property type="entry name" value="HSP20-like chaperones"/>
    <property type="match status" value="1"/>
</dbReference>
<dbReference type="PROSITE" id="PS01031">
    <property type="entry name" value="SHSP"/>
    <property type="match status" value="1"/>
</dbReference>
<comment type="subunit">
    <text>May form oligomeric structures.</text>
</comment>
<comment type="subcellular location">
    <subcellularLocation>
        <location evidence="2">Cytoplasm</location>
    </subcellularLocation>
</comment>
<comment type="similarity">
    <text evidence="1">Belongs to the small heat shock protein (HSP20) family.</text>
</comment>
<keyword id="KW-0963">Cytoplasm</keyword>
<keyword id="KW-1185">Reference proteome</keyword>
<keyword id="KW-0346">Stress response</keyword>
<proteinExistence type="evidence at transcript level"/>
<sequence length="203" mass="22276">MPPRRGIEVRQAVGDGAAPRWRMSLLENTFSSFLQSIGGGVAADGAAARAVFGEGSLFSPFLFGKFFDPADAFPLWEFEPEVLLAALRRGARTTVDWAETDSEYYLRADIPGGRKCDVEVSGDDAMRVVDVSGLWRAAPPPPPPDGRDWRAGRWWEHGFVRRVELPEDADWRKVEAFFDDGEGLLEIKVPKSGDAHQAAAATA</sequence>
<name>HS223_ORYSJ</name>
<reference key="1">
    <citation type="journal article" date="2005" name="Mol. Genet. Genomics">
        <title>A fine physical map of the rice chromosome 5.</title>
        <authorList>
            <person name="Cheng C.-H."/>
            <person name="Chung M.C."/>
            <person name="Liu S.-M."/>
            <person name="Chen S.-K."/>
            <person name="Kao F.Y."/>
            <person name="Lin S.-J."/>
            <person name="Hsiao S.-H."/>
            <person name="Tseng I.C."/>
            <person name="Hsing Y.-I.C."/>
            <person name="Wu H.-P."/>
            <person name="Chen C.-S."/>
            <person name="Shaw J.-F."/>
            <person name="Wu J."/>
            <person name="Matsumoto T."/>
            <person name="Sasaki T."/>
            <person name="Chen H.-C."/>
            <person name="Chow T.-Y."/>
        </authorList>
    </citation>
    <scope>NUCLEOTIDE SEQUENCE [LARGE SCALE GENOMIC DNA]</scope>
    <source>
        <strain>cv. Nipponbare</strain>
    </source>
</reference>
<reference key="2">
    <citation type="journal article" date="2005" name="Nature">
        <title>The map-based sequence of the rice genome.</title>
        <authorList>
            <consortium name="International rice genome sequencing project (IRGSP)"/>
        </authorList>
    </citation>
    <scope>NUCLEOTIDE SEQUENCE [LARGE SCALE GENOMIC DNA]</scope>
    <source>
        <strain>cv. Nipponbare</strain>
    </source>
</reference>
<reference key="3">
    <citation type="journal article" date="2008" name="Nucleic Acids Res.">
        <title>The rice annotation project database (RAP-DB): 2008 update.</title>
        <authorList>
            <consortium name="The rice annotation project (RAP)"/>
        </authorList>
    </citation>
    <scope>GENOME REANNOTATION</scope>
    <source>
        <strain>cv. Nipponbare</strain>
    </source>
</reference>
<reference key="4">
    <citation type="journal article" date="2013" name="Rice">
        <title>Improvement of the Oryza sativa Nipponbare reference genome using next generation sequence and optical map data.</title>
        <authorList>
            <person name="Kawahara Y."/>
            <person name="de la Bastide M."/>
            <person name="Hamilton J.P."/>
            <person name="Kanamori H."/>
            <person name="McCombie W.R."/>
            <person name="Ouyang S."/>
            <person name="Schwartz D.C."/>
            <person name="Tanaka T."/>
            <person name="Wu J."/>
            <person name="Zhou S."/>
            <person name="Childs K.L."/>
            <person name="Davidson R.M."/>
            <person name="Lin H."/>
            <person name="Quesada-Ocampo L."/>
            <person name="Vaillancourt B."/>
            <person name="Sakai H."/>
            <person name="Lee S.S."/>
            <person name="Kim J."/>
            <person name="Numa H."/>
            <person name="Itoh T."/>
            <person name="Buell C.R."/>
            <person name="Matsumoto T."/>
        </authorList>
    </citation>
    <scope>GENOME REANNOTATION</scope>
    <source>
        <strain>cv. Nipponbare</strain>
    </source>
</reference>
<reference key="5">
    <citation type="journal article" date="2005" name="PLoS Biol.">
        <title>The genomes of Oryza sativa: a history of duplications.</title>
        <authorList>
            <person name="Yu J."/>
            <person name="Wang J."/>
            <person name="Lin W."/>
            <person name="Li S."/>
            <person name="Li H."/>
            <person name="Zhou J."/>
            <person name="Ni P."/>
            <person name="Dong W."/>
            <person name="Hu S."/>
            <person name="Zeng C."/>
            <person name="Zhang J."/>
            <person name="Zhang Y."/>
            <person name="Li R."/>
            <person name="Xu Z."/>
            <person name="Li S."/>
            <person name="Li X."/>
            <person name="Zheng H."/>
            <person name="Cong L."/>
            <person name="Lin L."/>
            <person name="Yin J."/>
            <person name="Geng J."/>
            <person name="Li G."/>
            <person name="Shi J."/>
            <person name="Liu J."/>
            <person name="Lv H."/>
            <person name="Li J."/>
            <person name="Wang J."/>
            <person name="Deng Y."/>
            <person name="Ran L."/>
            <person name="Shi X."/>
            <person name="Wang X."/>
            <person name="Wu Q."/>
            <person name="Li C."/>
            <person name="Ren X."/>
            <person name="Wang J."/>
            <person name="Wang X."/>
            <person name="Li D."/>
            <person name="Liu D."/>
            <person name="Zhang X."/>
            <person name="Ji Z."/>
            <person name="Zhao W."/>
            <person name="Sun Y."/>
            <person name="Zhang Z."/>
            <person name="Bao J."/>
            <person name="Han Y."/>
            <person name="Dong L."/>
            <person name="Ji J."/>
            <person name="Chen P."/>
            <person name="Wu S."/>
            <person name="Liu J."/>
            <person name="Xiao Y."/>
            <person name="Bu D."/>
            <person name="Tan J."/>
            <person name="Yang L."/>
            <person name="Ye C."/>
            <person name="Zhang J."/>
            <person name="Xu J."/>
            <person name="Zhou Y."/>
            <person name="Yu Y."/>
            <person name="Zhang B."/>
            <person name="Zhuang S."/>
            <person name="Wei H."/>
            <person name="Liu B."/>
            <person name="Lei M."/>
            <person name="Yu H."/>
            <person name="Li Y."/>
            <person name="Xu H."/>
            <person name="Wei S."/>
            <person name="He X."/>
            <person name="Fang L."/>
            <person name="Zhang Z."/>
            <person name="Zhang Y."/>
            <person name="Huang X."/>
            <person name="Su Z."/>
            <person name="Tong W."/>
            <person name="Li J."/>
            <person name="Tong Z."/>
            <person name="Li S."/>
            <person name="Ye J."/>
            <person name="Wang L."/>
            <person name="Fang L."/>
            <person name="Lei T."/>
            <person name="Chen C.-S."/>
            <person name="Chen H.-C."/>
            <person name="Xu Z."/>
            <person name="Li H."/>
            <person name="Huang H."/>
            <person name="Zhang F."/>
            <person name="Xu H."/>
            <person name="Li N."/>
            <person name="Zhao C."/>
            <person name="Li S."/>
            <person name="Dong L."/>
            <person name="Huang Y."/>
            <person name="Li L."/>
            <person name="Xi Y."/>
            <person name="Qi Q."/>
            <person name="Li W."/>
            <person name="Zhang B."/>
            <person name="Hu W."/>
            <person name="Zhang Y."/>
            <person name="Tian X."/>
            <person name="Jiao Y."/>
            <person name="Liang X."/>
            <person name="Jin J."/>
            <person name="Gao L."/>
            <person name="Zheng W."/>
            <person name="Hao B."/>
            <person name="Liu S.-M."/>
            <person name="Wang W."/>
            <person name="Yuan L."/>
            <person name="Cao M."/>
            <person name="McDermott J."/>
            <person name="Samudrala R."/>
            <person name="Wang J."/>
            <person name="Wong G.K.-S."/>
            <person name="Yang H."/>
        </authorList>
    </citation>
    <scope>NUCLEOTIDE SEQUENCE [LARGE SCALE GENOMIC DNA]</scope>
    <source>
        <strain>cv. Nipponbare</strain>
    </source>
</reference>
<reference key="6">
    <citation type="journal article" date="2003" name="Science">
        <title>Collection, mapping, and annotation of over 28,000 cDNA clones from japonica rice.</title>
        <authorList>
            <consortium name="The rice full-length cDNA consortium"/>
        </authorList>
    </citation>
    <scope>NUCLEOTIDE SEQUENCE [LARGE SCALE MRNA]</scope>
    <source>
        <strain>cv. Nipponbare</strain>
    </source>
</reference>
<reference key="7">
    <citation type="journal article" date="2009" name="BMC Genomics">
        <title>Rice sHsp genes: genomic organization and expression profiling under stress and development.</title>
        <authorList>
            <person name="Sarkar N.K."/>
            <person name="Kim Y.-K."/>
            <person name="Grover A."/>
        </authorList>
    </citation>
    <scope>GENE FAMILY</scope>
</reference>
<accession>Q6AUW3</accession>
<accession>A0A0P0WP72</accession>
<gene>
    <name type="primary">HSP22.3</name>
    <name type="ordered locus">Os05g0500500</name>
    <name type="ordered locus">LOC_Os05g42120</name>
    <name type="ORF">OJ1057_B02.14</name>
    <name type="ORF">OsJ_19091</name>
</gene>